<proteinExistence type="evidence at transcript level"/>
<organism>
    <name type="scientific">Schistocerca gregaria</name>
    <name type="common">Desert locust</name>
    <name type="synonym">Gryllus gregarius</name>
    <dbReference type="NCBI Taxonomy" id="7010"/>
    <lineage>
        <taxon>Eukaryota</taxon>
        <taxon>Metazoa</taxon>
        <taxon>Ecdysozoa</taxon>
        <taxon>Arthropoda</taxon>
        <taxon>Hexapoda</taxon>
        <taxon>Insecta</taxon>
        <taxon>Pterygota</taxon>
        <taxon>Neoptera</taxon>
        <taxon>Polyneoptera</taxon>
        <taxon>Orthoptera</taxon>
        <taxon>Caelifera</taxon>
        <taxon>Acrididea</taxon>
        <taxon>Acridomorpha</taxon>
        <taxon>Acridoidea</taxon>
        <taxon>Acrididae</taxon>
        <taxon>Cyrtacanthacridinae</taxon>
        <taxon>Schistocerca</taxon>
    </lineage>
</organism>
<protein>
    <recommendedName>
        <fullName>Ion transport peptide-like</fullName>
    </recommendedName>
</protein>
<comment type="subcellular location">
    <subcellularLocation>
        <location>Secreted</location>
    </subcellularLocation>
</comment>
<comment type="similarity">
    <text evidence="3">Belongs to the arthropod CHH/MIH/GIH/VIH hormone family.</text>
</comment>
<accession>Q26492</accession>
<feature type="signal peptide" evidence="2">
    <location>
        <begin position="1"/>
        <end status="unknown"/>
    </location>
</feature>
<feature type="propeptide" id="PRO_0000019088" evidence="2">
    <location>
        <begin status="unknown"/>
        <end position="55"/>
    </location>
</feature>
<feature type="peptide" id="PRO_0000019089" description="Ion transport peptide-like">
    <location>
        <begin position="56"/>
        <end position="134"/>
    </location>
</feature>
<feature type="disulfide bond" evidence="1">
    <location>
        <begin position="62"/>
        <end position="98"/>
    </location>
</feature>
<feature type="disulfide bond" evidence="1">
    <location>
        <begin position="78"/>
        <end position="94"/>
    </location>
</feature>
<feature type="disulfide bond" evidence="1">
    <location>
        <begin position="81"/>
        <end position="107"/>
    </location>
</feature>
<reference key="1">
    <citation type="journal article" date="1996" name="J. Exp. Biol.">
        <title>Locust ion transport peptide (ITP): primary structure, cDNA and expression in a baculovirus system.</title>
        <authorList>
            <person name="Meredith J."/>
            <person name="Ring M."/>
            <person name="Macins A."/>
            <person name="Marschall J."/>
            <person name="Cheng N.N."/>
            <person name="Theilmann D."/>
            <person name="Brock H.W."/>
            <person name="Phillips J.E."/>
        </authorList>
    </citation>
    <scope>NUCLEOTIDE SEQUENCE [MRNA]</scope>
</reference>
<name>ITPL_SCHGR</name>
<sequence>MHHQKQQQQQKQQGEAPCRHLQWRLSGVVLCVLVVASLVSTAASSPLDPHHLAKRSFFDIQCKGVYDKSIFARLDRICEDCYNLFREPQLHSLCRKDCFTSDYFKGCIDVLLLQDDMDKIQSWIKQIHGAEPGV</sequence>
<keyword id="KW-0165">Cleavage on pair of basic residues</keyword>
<keyword id="KW-1015">Disulfide bond</keyword>
<keyword id="KW-0372">Hormone</keyword>
<keyword id="KW-0964">Secreted</keyword>
<keyword id="KW-0732">Signal</keyword>
<evidence type="ECO:0000250" key="1"/>
<evidence type="ECO:0000255" key="2"/>
<evidence type="ECO:0000305" key="3"/>
<dbReference type="EMBL" id="U36920">
    <property type="protein sequence ID" value="AAB16823.1"/>
    <property type="molecule type" value="mRNA"/>
</dbReference>
<dbReference type="RefSeq" id="XP_049859893.1">
    <property type="nucleotide sequence ID" value="XM_050003936.1"/>
</dbReference>
<dbReference type="RefSeq" id="XP_049859894.1">
    <property type="nucleotide sequence ID" value="XM_050003937.1"/>
</dbReference>
<dbReference type="SMR" id="Q26492"/>
<dbReference type="EnsemblMetazoa" id="XM_050003936.1">
    <property type="protein sequence ID" value="XP_049859893.1"/>
    <property type="gene ID" value="LOC126354358"/>
</dbReference>
<dbReference type="EnsemblMetazoa" id="XM_050003937.1">
    <property type="protein sequence ID" value="XP_049859894.1"/>
    <property type="gene ID" value="LOC126354358"/>
</dbReference>
<dbReference type="GeneID" id="126354358"/>
<dbReference type="OrthoDB" id="6365952at2759"/>
<dbReference type="GO" id="GO:0005576">
    <property type="term" value="C:extracellular region"/>
    <property type="evidence" value="ECO:0007669"/>
    <property type="project" value="UniProtKB-SubCell"/>
</dbReference>
<dbReference type="GO" id="GO:0005184">
    <property type="term" value="F:neuropeptide hormone activity"/>
    <property type="evidence" value="ECO:0007669"/>
    <property type="project" value="InterPro"/>
</dbReference>
<dbReference type="GO" id="GO:0007623">
    <property type="term" value="P:circadian rhythm"/>
    <property type="evidence" value="ECO:0007669"/>
    <property type="project" value="TreeGrafter"/>
</dbReference>
<dbReference type="FunFam" id="1.10.2010.10:FF:000001">
    <property type="entry name" value="Ion transport peptide isoform C"/>
    <property type="match status" value="1"/>
</dbReference>
<dbReference type="Gene3D" id="1.10.2010.10">
    <property type="entry name" value="Crustacean CHH/MIH/GIH neurohormone"/>
    <property type="match status" value="1"/>
</dbReference>
<dbReference type="InterPro" id="IPR018251">
    <property type="entry name" value="Crust_neurhormone_CS"/>
</dbReference>
<dbReference type="InterPro" id="IPR031098">
    <property type="entry name" value="Crust_neurohorm"/>
</dbReference>
<dbReference type="InterPro" id="IPR035957">
    <property type="entry name" value="Crust_neurohorm_sf"/>
</dbReference>
<dbReference type="InterPro" id="IPR001166">
    <property type="entry name" value="Hyperglycemic"/>
</dbReference>
<dbReference type="InterPro" id="IPR000346">
    <property type="entry name" value="Hyperglycemic1"/>
</dbReference>
<dbReference type="PANTHER" id="PTHR35981">
    <property type="entry name" value="ION TRANSPORT PEPTIDE, ISOFORM C"/>
    <property type="match status" value="1"/>
</dbReference>
<dbReference type="PANTHER" id="PTHR35981:SF2">
    <property type="entry name" value="ION TRANSPORT PEPTIDE, ISOFORM C"/>
    <property type="match status" value="1"/>
</dbReference>
<dbReference type="Pfam" id="PF01147">
    <property type="entry name" value="Crust_neurohorm"/>
    <property type="match status" value="1"/>
</dbReference>
<dbReference type="PRINTS" id="PR00548">
    <property type="entry name" value="HYPRGLYCEMC1"/>
</dbReference>
<dbReference type="PRINTS" id="PR00550">
    <property type="entry name" value="HYPRGLYCEMIC"/>
</dbReference>
<dbReference type="SUPFAM" id="SSF81778">
    <property type="entry name" value="Crustacean CHH/MIH/GIH neurohormone"/>
    <property type="match status" value="1"/>
</dbReference>
<dbReference type="PROSITE" id="PS01250">
    <property type="entry name" value="CHH_MIH_GIH"/>
    <property type="match status" value="1"/>
</dbReference>